<proteinExistence type="inferred from homology"/>
<evidence type="ECO:0000255" key="1">
    <source>
        <dbReference type="HAMAP-Rule" id="MF_00158"/>
    </source>
</evidence>
<feature type="chain" id="PRO_1000097118" description="Pantothenate synthetase">
    <location>
        <begin position="1"/>
        <end position="279"/>
    </location>
</feature>
<feature type="active site" description="Proton donor" evidence="1">
    <location>
        <position position="38"/>
    </location>
</feature>
<feature type="binding site" evidence="1">
    <location>
        <begin position="31"/>
        <end position="38"/>
    </location>
    <ligand>
        <name>ATP</name>
        <dbReference type="ChEBI" id="CHEBI:30616"/>
    </ligand>
</feature>
<feature type="binding site" evidence="1">
    <location>
        <position position="62"/>
    </location>
    <ligand>
        <name>(R)-pantoate</name>
        <dbReference type="ChEBI" id="CHEBI:15980"/>
    </ligand>
</feature>
<feature type="binding site" evidence="1">
    <location>
        <position position="62"/>
    </location>
    <ligand>
        <name>beta-alanine</name>
        <dbReference type="ChEBI" id="CHEBI:57966"/>
    </ligand>
</feature>
<feature type="binding site" evidence="1">
    <location>
        <begin position="150"/>
        <end position="153"/>
    </location>
    <ligand>
        <name>ATP</name>
        <dbReference type="ChEBI" id="CHEBI:30616"/>
    </ligand>
</feature>
<feature type="binding site" evidence="1">
    <location>
        <position position="156"/>
    </location>
    <ligand>
        <name>(R)-pantoate</name>
        <dbReference type="ChEBI" id="CHEBI:15980"/>
    </ligand>
</feature>
<feature type="binding site" evidence="1">
    <location>
        <position position="179"/>
    </location>
    <ligand>
        <name>ATP</name>
        <dbReference type="ChEBI" id="CHEBI:30616"/>
    </ligand>
</feature>
<feature type="binding site" evidence="1">
    <location>
        <begin position="187"/>
        <end position="190"/>
    </location>
    <ligand>
        <name>ATP</name>
        <dbReference type="ChEBI" id="CHEBI:30616"/>
    </ligand>
</feature>
<protein>
    <recommendedName>
        <fullName evidence="1">Pantothenate synthetase</fullName>
        <shortName evidence="1">PS</shortName>
        <ecNumber evidence="1">6.3.2.1</ecNumber>
    </recommendedName>
    <alternativeName>
        <fullName evidence="1">Pantoate--beta-alanine ligase</fullName>
    </alternativeName>
    <alternativeName>
        <fullName evidence="1">Pantoate-activating enzyme</fullName>
    </alternativeName>
</protein>
<accession>B2FL68</accession>
<sequence>MIQTFNELGALREQIAQWKREGLRVALVPTMGNLHGGHHSLVTLARQYADKVVASIFVNPTQFGPNEDFSRYPRTPEADVAGLEQVGCDAVWLPSVEAMYPLGVDKTTQMHAPGVSEVLEGASRPGHFDGVCTVVARLFLQVQPDVAVFGRKDYQQLAVIRQMVAELSFPIQIVGADIVRDEDGLAKSSRNQYLSAEQRPVATTIHRTLLGMREGYVAGQARDRIEADATAALQAAGFQVDYAVLRTPELAEPTFDGGGRVALIAARLGSTRLIDNLEF</sequence>
<comment type="function">
    <text evidence="1">Catalyzes the condensation of pantoate with beta-alanine in an ATP-dependent reaction via a pantoyl-adenylate intermediate.</text>
</comment>
<comment type="catalytic activity">
    <reaction evidence="1">
        <text>(R)-pantoate + beta-alanine + ATP = (R)-pantothenate + AMP + diphosphate + H(+)</text>
        <dbReference type="Rhea" id="RHEA:10912"/>
        <dbReference type="ChEBI" id="CHEBI:15378"/>
        <dbReference type="ChEBI" id="CHEBI:15980"/>
        <dbReference type="ChEBI" id="CHEBI:29032"/>
        <dbReference type="ChEBI" id="CHEBI:30616"/>
        <dbReference type="ChEBI" id="CHEBI:33019"/>
        <dbReference type="ChEBI" id="CHEBI:57966"/>
        <dbReference type="ChEBI" id="CHEBI:456215"/>
        <dbReference type="EC" id="6.3.2.1"/>
    </reaction>
</comment>
<comment type="pathway">
    <text evidence="1">Cofactor biosynthesis; (R)-pantothenate biosynthesis; (R)-pantothenate from (R)-pantoate and beta-alanine: step 1/1.</text>
</comment>
<comment type="subunit">
    <text evidence="1">Homodimer.</text>
</comment>
<comment type="subcellular location">
    <subcellularLocation>
        <location evidence="1">Cytoplasm</location>
    </subcellularLocation>
</comment>
<comment type="miscellaneous">
    <text evidence="1">The reaction proceeds by a bi uni uni bi ping pong mechanism.</text>
</comment>
<comment type="similarity">
    <text evidence="1">Belongs to the pantothenate synthetase family.</text>
</comment>
<organism>
    <name type="scientific">Stenotrophomonas maltophilia (strain K279a)</name>
    <dbReference type="NCBI Taxonomy" id="522373"/>
    <lineage>
        <taxon>Bacteria</taxon>
        <taxon>Pseudomonadati</taxon>
        <taxon>Pseudomonadota</taxon>
        <taxon>Gammaproteobacteria</taxon>
        <taxon>Lysobacterales</taxon>
        <taxon>Lysobacteraceae</taxon>
        <taxon>Stenotrophomonas</taxon>
        <taxon>Stenotrophomonas maltophilia group</taxon>
    </lineage>
</organism>
<name>PANC_STRMK</name>
<reference key="1">
    <citation type="journal article" date="2008" name="Genome Biol.">
        <title>The complete genome, comparative and functional analysis of Stenotrophomonas maltophilia reveals an organism heavily shielded by drug resistance determinants.</title>
        <authorList>
            <person name="Crossman L.C."/>
            <person name="Gould V.C."/>
            <person name="Dow J.M."/>
            <person name="Vernikos G.S."/>
            <person name="Okazaki A."/>
            <person name="Sebaihia M."/>
            <person name="Saunders D."/>
            <person name="Arrowsmith C."/>
            <person name="Carver T."/>
            <person name="Peters N."/>
            <person name="Adlem E."/>
            <person name="Kerhornou A."/>
            <person name="Lord A."/>
            <person name="Murphy L."/>
            <person name="Seeger K."/>
            <person name="Squares R."/>
            <person name="Rutter S."/>
            <person name="Quail M.A."/>
            <person name="Rajandream M.A."/>
            <person name="Harris D."/>
            <person name="Churcher C."/>
            <person name="Bentley S.D."/>
            <person name="Parkhill J."/>
            <person name="Thomson N.R."/>
            <person name="Avison M.B."/>
        </authorList>
    </citation>
    <scope>NUCLEOTIDE SEQUENCE [LARGE SCALE GENOMIC DNA]</scope>
    <source>
        <strain>K279a</strain>
    </source>
</reference>
<gene>
    <name evidence="1" type="primary">panC</name>
    <name type="ordered locus">Smlt1780</name>
</gene>
<keyword id="KW-0067">ATP-binding</keyword>
<keyword id="KW-0963">Cytoplasm</keyword>
<keyword id="KW-0436">Ligase</keyword>
<keyword id="KW-0547">Nucleotide-binding</keyword>
<keyword id="KW-0566">Pantothenate biosynthesis</keyword>
<keyword id="KW-1185">Reference proteome</keyword>
<dbReference type="EC" id="6.3.2.1" evidence="1"/>
<dbReference type="EMBL" id="AM743169">
    <property type="protein sequence ID" value="CAQ45301.1"/>
    <property type="molecule type" value="Genomic_DNA"/>
</dbReference>
<dbReference type="RefSeq" id="WP_012479762.1">
    <property type="nucleotide sequence ID" value="NC_010943.1"/>
</dbReference>
<dbReference type="SMR" id="B2FL68"/>
<dbReference type="EnsemblBacteria" id="CAQ45301">
    <property type="protein sequence ID" value="CAQ45301"/>
    <property type="gene ID" value="Smlt1780"/>
</dbReference>
<dbReference type="KEGG" id="sml:Smlt1780"/>
<dbReference type="PATRIC" id="fig|522373.3.peg.1701"/>
<dbReference type="eggNOG" id="COG0414">
    <property type="taxonomic scope" value="Bacteria"/>
</dbReference>
<dbReference type="HOGENOM" id="CLU_047148_0_0_6"/>
<dbReference type="UniPathway" id="UPA00028">
    <property type="reaction ID" value="UER00005"/>
</dbReference>
<dbReference type="Proteomes" id="UP000008840">
    <property type="component" value="Chromosome"/>
</dbReference>
<dbReference type="GO" id="GO:0005829">
    <property type="term" value="C:cytosol"/>
    <property type="evidence" value="ECO:0007669"/>
    <property type="project" value="TreeGrafter"/>
</dbReference>
<dbReference type="GO" id="GO:0005524">
    <property type="term" value="F:ATP binding"/>
    <property type="evidence" value="ECO:0007669"/>
    <property type="project" value="UniProtKB-KW"/>
</dbReference>
<dbReference type="GO" id="GO:0004592">
    <property type="term" value="F:pantoate-beta-alanine ligase activity"/>
    <property type="evidence" value="ECO:0007669"/>
    <property type="project" value="UniProtKB-UniRule"/>
</dbReference>
<dbReference type="GO" id="GO:0015940">
    <property type="term" value="P:pantothenate biosynthetic process"/>
    <property type="evidence" value="ECO:0007669"/>
    <property type="project" value="UniProtKB-UniRule"/>
</dbReference>
<dbReference type="CDD" id="cd00560">
    <property type="entry name" value="PanC"/>
    <property type="match status" value="1"/>
</dbReference>
<dbReference type="FunFam" id="3.40.50.620:FF:000114">
    <property type="entry name" value="Pantothenate synthetase"/>
    <property type="match status" value="1"/>
</dbReference>
<dbReference type="Gene3D" id="3.40.50.620">
    <property type="entry name" value="HUPs"/>
    <property type="match status" value="1"/>
</dbReference>
<dbReference type="Gene3D" id="3.30.1300.10">
    <property type="entry name" value="Pantoate-beta-alanine ligase, C-terminal domain"/>
    <property type="match status" value="1"/>
</dbReference>
<dbReference type="HAMAP" id="MF_00158">
    <property type="entry name" value="PanC"/>
    <property type="match status" value="1"/>
</dbReference>
<dbReference type="InterPro" id="IPR003721">
    <property type="entry name" value="Pantoate_ligase"/>
</dbReference>
<dbReference type="InterPro" id="IPR042176">
    <property type="entry name" value="Pantoate_ligase_C"/>
</dbReference>
<dbReference type="InterPro" id="IPR014729">
    <property type="entry name" value="Rossmann-like_a/b/a_fold"/>
</dbReference>
<dbReference type="NCBIfam" id="TIGR00018">
    <property type="entry name" value="panC"/>
    <property type="match status" value="1"/>
</dbReference>
<dbReference type="PANTHER" id="PTHR21299">
    <property type="entry name" value="CYTIDYLATE KINASE/PANTOATE-BETA-ALANINE LIGASE"/>
    <property type="match status" value="1"/>
</dbReference>
<dbReference type="PANTHER" id="PTHR21299:SF1">
    <property type="entry name" value="PANTOATE--BETA-ALANINE LIGASE"/>
    <property type="match status" value="1"/>
</dbReference>
<dbReference type="Pfam" id="PF02569">
    <property type="entry name" value="Pantoate_ligase"/>
    <property type="match status" value="1"/>
</dbReference>
<dbReference type="SUPFAM" id="SSF52374">
    <property type="entry name" value="Nucleotidylyl transferase"/>
    <property type="match status" value="1"/>
</dbReference>